<accession>A1T882</accession>
<protein>
    <recommendedName>
        <fullName evidence="1">Crossover junction endodeoxyribonuclease RuvC</fullName>
        <ecNumber evidence="1">3.1.21.10</ecNumber>
    </recommendedName>
    <alternativeName>
        <fullName evidence="1">Holliday junction nuclease RuvC</fullName>
    </alternativeName>
    <alternativeName>
        <fullName evidence="1">Holliday junction resolvase RuvC</fullName>
    </alternativeName>
</protein>
<keyword id="KW-0963">Cytoplasm</keyword>
<keyword id="KW-0227">DNA damage</keyword>
<keyword id="KW-0233">DNA recombination</keyword>
<keyword id="KW-0234">DNA repair</keyword>
<keyword id="KW-0238">DNA-binding</keyword>
<keyword id="KW-0255">Endonuclease</keyword>
<keyword id="KW-0378">Hydrolase</keyword>
<keyword id="KW-0460">Magnesium</keyword>
<keyword id="KW-0479">Metal-binding</keyword>
<keyword id="KW-0540">Nuclease</keyword>
<evidence type="ECO:0000255" key="1">
    <source>
        <dbReference type="HAMAP-Rule" id="MF_00034"/>
    </source>
</evidence>
<gene>
    <name evidence="1" type="primary">ruvC</name>
    <name type="ordered locus">Mvan_2573</name>
</gene>
<sequence>MRVMGVDPGLTRCGLSVIESGKGRQVIALDVDVVRTPAGHPLAHRLLAISDAVDHWLDTHRPDVIAIERVFSNQNANTAMGTAQAGGVIALAAARRDIDVHFHTPSEVKAAVTGNGRADKAQVTEMVTRILALQQKPTPADAADALALAICHCWRAPMLGRMAAAEEMAAEQRRKYQATLKAKAKAAQMSRSTR</sequence>
<comment type="function">
    <text evidence="1">The RuvA-RuvB-RuvC complex processes Holliday junction (HJ) DNA during genetic recombination and DNA repair. Endonuclease that resolves HJ intermediates. Cleaves cruciform DNA by making single-stranded nicks across the HJ at symmetrical positions within the homologous arms, yielding a 5'-phosphate and a 3'-hydroxyl group; requires a central core of homology in the junction. The consensus cleavage sequence is 5'-(A/T)TT(C/G)-3'. Cleavage occurs on the 3'-side of the TT dinucleotide at the point of strand exchange. HJ branch migration catalyzed by RuvA-RuvB allows RuvC to scan DNA until it finds its consensus sequence, where it cleaves and resolves the cruciform DNA.</text>
</comment>
<comment type="catalytic activity">
    <reaction evidence="1">
        <text>Endonucleolytic cleavage at a junction such as a reciprocal single-stranded crossover between two homologous DNA duplexes (Holliday junction).</text>
        <dbReference type="EC" id="3.1.21.10"/>
    </reaction>
</comment>
<comment type="cofactor">
    <cofactor evidence="1">
        <name>Mg(2+)</name>
        <dbReference type="ChEBI" id="CHEBI:18420"/>
    </cofactor>
    <text evidence="1">Binds 2 Mg(2+) ion per subunit.</text>
</comment>
<comment type="subunit">
    <text evidence="1">Homodimer which binds Holliday junction (HJ) DNA. The HJ becomes 2-fold symmetrical on binding to RuvC with unstacked arms; it has a different conformation from HJ DNA in complex with RuvA. In the full resolvosome a probable DNA-RuvA(4)-RuvB(12)-RuvC(2) complex forms which resolves the HJ.</text>
</comment>
<comment type="subcellular location">
    <subcellularLocation>
        <location evidence="1">Cytoplasm</location>
    </subcellularLocation>
</comment>
<comment type="similarity">
    <text evidence="1">Belongs to the RuvC family.</text>
</comment>
<organism>
    <name type="scientific">Mycolicibacterium vanbaalenii (strain DSM 7251 / JCM 13017 / BCRC 16820 / KCTC 9966 / NRRL B-24157 / PYR-1)</name>
    <name type="common">Mycobacterium vanbaalenii</name>
    <dbReference type="NCBI Taxonomy" id="350058"/>
    <lineage>
        <taxon>Bacteria</taxon>
        <taxon>Bacillati</taxon>
        <taxon>Actinomycetota</taxon>
        <taxon>Actinomycetes</taxon>
        <taxon>Mycobacteriales</taxon>
        <taxon>Mycobacteriaceae</taxon>
        <taxon>Mycolicibacterium</taxon>
    </lineage>
</organism>
<dbReference type="EC" id="3.1.21.10" evidence="1"/>
<dbReference type="EMBL" id="CP000511">
    <property type="protein sequence ID" value="ABM13382.1"/>
    <property type="molecule type" value="Genomic_DNA"/>
</dbReference>
<dbReference type="RefSeq" id="WP_011779791.1">
    <property type="nucleotide sequence ID" value="NZ_JACKSD010000179.1"/>
</dbReference>
<dbReference type="SMR" id="A1T882"/>
<dbReference type="STRING" id="350058.Mvan_2573"/>
<dbReference type="KEGG" id="mva:Mvan_2573"/>
<dbReference type="eggNOG" id="COG0817">
    <property type="taxonomic scope" value="Bacteria"/>
</dbReference>
<dbReference type="HOGENOM" id="CLU_091257_0_2_11"/>
<dbReference type="Proteomes" id="UP000009159">
    <property type="component" value="Chromosome"/>
</dbReference>
<dbReference type="GO" id="GO:0005737">
    <property type="term" value="C:cytoplasm"/>
    <property type="evidence" value="ECO:0007669"/>
    <property type="project" value="UniProtKB-SubCell"/>
</dbReference>
<dbReference type="GO" id="GO:0048476">
    <property type="term" value="C:Holliday junction resolvase complex"/>
    <property type="evidence" value="ECO:0007669"/>
    <property type="project" value="UniProtKB-UniRule"/>
</dbReference>
<dbReference type="GO" id="GO:0008821">
    <property type="term" value="F:crossover junction DNA endonuclease activity"/>
    <property type="evidence" value="ECO:0007669"/>
    <property type="project" value="UniProtKB-UniRule"/>
</dbReference>
<dbReference type="GO" id="GO:0003677">
    <property type="term" value="F:DNA binding"/>
    <property type="evidence" value="ECO:0007669"/>
    <property type="project" value="UniProtKB-KW"/>
</dbReference>
<dbReference type="GO" id="GO:0000287">
    <property type="term" value="F:magnesium ion binding"/>
    <property type="evidence" value="ECO:0007669"/>
    <property type="project" value="UniProtKB-UniRule"/>
</dbReference>
<dbReference type="GO" id="GO:0006310">
    <property type="term" value="P:DNA recombination"/>
    <property type="evidence" value="ECO:0007669"/>
    <property type="project" value="UniProtKB-UniRule"/>
</dbReference>
<dbReference type="GO" id="GO:0006281">
    <property type="term" value="P:DNA repair"/>
    <property type="evidence" value="ECO:0007669"/>
    <property type="project" value="UniProtKB-UniRule"/>
</dbReference>
<dbReference type="CDD" id="cd16962">
    <property type="entry name" value="RuvC"/>
    <property type="match status" value="1"/>
</dbReference>
<dbReference type="FunFam" id="3.30.420.10:FF:000002">
    <property type="entry name" value="Crossover junction endodeoxyribonuclease RuvC"/>
    <property type="match status" value="1"/>
</dbReference>
<dbReference type="Gene3D" id="3.30.420.10">
    <property type="entry name" value="Ribonuclease H-like superfamily/Ribonuclease H"/>
    <property type="match status" value="1"/>
</dbReference>
<dbReference type="HAMAP" id="MF_00034">
    <property type="entry name" value="RuvC"/>
    <property type="match status" value="1"/>
</dbReference>
<dbReference type="InterPro" id="IPR012337">
    <property type="entry name" value="RNaseH-like_sf"/>
</dbReference>
<dbReference type="InterPro" id="IPR036397">
    <property type="entry name" value="RNaseH_sf"/>
</dbReference>
<dbReference type="InterPro" id="IPR020563">
    <property type="entry name" value="X-over_junc_endoDNase_Mg_BS"/>
</dbReference>
<dbReference type="InterPro" id="IPR002176">
    <property type="entry name" value="X-over_junc_endoDNase_RuvC"/>
</dbReference>
<dbReference type="NCBIfam" id="TIGR00228">
    <property type="entry name" value="ruvC"/>
    <property type="match status" value="1"/>
</dbReference>
<dbReference type="PANTHER" id="PTHR30194">
    <property type="entry name" value="CROSSOVER JUNCTION ENDODEOXYRIBONUCLEASE RUVC"/>
    <property type="match status" value="1"/>
</dbReference>
<dbReference type="PANTHER" id="PTHR30194:SF3">
    <property type="entry name" value="CROSSOVER JUNCTION ENDODEOXYRIBONUCLEASE RUVC"/>
    <property type="match status" value="1"/>
</dbReference>
<dbReference type="Pfam" id="PF02075">
    <property type="entry name" value="RuvC"/>
    <property type="match status" value="1"/>
</dbReference>
<dbReference type="PRINTS" id="PR00696">
    <property type="entry name" value="RSOLVASERUVC"/>
</dbReference>
<dbReference type="SUPFAM" id="SSF53098">
    <property type="entry name" value="Ribonuclease H-like"/>
    <property type="match status" value="1"/>
</dbReference>
<dbReference type="PROSITE" id="PS01321">
    <property type="entry name" value="RUVC"/>
    <property type="match status" value="1"/>
</dbReference>
<name>RUVC_MYCVP</name>
<proteinExistence type="inferred from homology"/>
<reference key="1">
    <citation type="submission" date="2006-12" db="EMBL/GenBank/DDBJ databases">
        <title>Complete sequence of Mycobacterium vanbaalenii PYR-1.</title>
        <authorList>
            <consortium name="US DOE Joint Genome Institute"/>
            <person name="Copeland A."/>
            <person name="Lucas S."/>
            <person name="Lapidus A."/>
            <person name="Barry K."/>
            <person name="Detter J.C."/>
            <person name="Glavina del Rio T."/>
            <person name="Hammon N."/>
            <person name="Israni S."/>
            <person name="Dalin E."/>
            <person name="Tice H."/>
            <person name="Pitluck S."/>
            <person name="Singan V."/>
            <person name="Schmutz J."/>
            <person name="Larimer F."/>
            <person name="Land M."/>
            <person name="Hauser L."/>
            <person name="Kyrpides N."/>
            <person name="Anderson I.J."/>
            <person name="Miller C."/>
            <person name="Richardson P."/>
        </authorList>
    </citation>
    <scope>NUCLEOTIDE SEQUENCE [LARGE SCALE GENOMIC DNA]</scope>
    <source>
        <strain>DSM 7251 / JCM 13017 / BCRC 16820 / KCTC 9966 / NRRL B-24157 / PYR-1</strain>
    </source>
</reference>
<feature type="chain" id="PRO_1000002782" description="Crossover junction endodeoxyribonuclease RuvC">
    <location>
        <begin position="1"/>
        <end position="194"/>
    </location>
</feature>
<feature type="active site" evidence="1">
    <location>
        <position position="7"/>
    </location>
</feature>
<feature type="active site" evidence="1">
    <location>
        <position position="68"/>
    </location>
</feature>
<feature type="active site" evidence="1">
    <location>
        <position position="141"/>
    </location>
</feature>
<feature type="binding site" evidence="1">
    <location>
        <position position="7"/>
    </location>
    <ligand>
        <name>Mg(2+)</name>
        <dbReference type="ChEBI" id="CHEBI:18420"/>
        <label>1</label>
    </ligand>
</feature>
<feature type="binding site" evidence="1">
    <location>
        <position position="68"/>
    </location>
    <ligand>
        <name>Mg(2+)</name>
        <dbReference type="ChEBI" id="CHEBI:18420"/>
        <label>2</label>
    </ligand>
</feature>
<feature type="binding site" evidence="1">
    <location>
        <position position="141"/>
    </location>
    <ligand>
        <name>Mg(2+)</name>
        <dbReference type="ChEBI" id="CHEBI:18420"/>
        <label>1</label>
    </ligand>
</feature>